<gene>
    <name evidence="1" type="primary">serS</name>
    <name type="ordered locus">Rfer_3243</name>
</gene>
<accession>Q21TF1</accession>
<dbReference type="EC" id="6.1.1.11" evidence="1"/>
<dbReference type="EMBL" id="CP000267">
    <property type="protein sequence ID" value="ABD70952.1"/>
    <property type="molecule type" value="Genomic_DNA"/>
</dbReference>
<dbReference type="RefSeq" id="WP_011465515.1">
    <property type="nucleotide sequence ID" value="NC_007908.1"/>
</dbReference>
<dbReference type="SMR" id="Q21TF1"/>
<dbReference type="STRING" id="338969.Rfer_3243"/>
<dbReference type="KEGG" id="rfr:Rfer_3243"/>
<dbReference type="eggNOG" id="COG0172">
    <property type="taxonomic scope" value="Bacteria"/>
</dbReference>
<dbReference type="HOGENOM" id="CLU_023797_0_1_4"/>
<dbReference type="OrthoDB" id="9804647at2"/>
<dbReference type="UniPathway" id="UPA00906">
    <property type="reaction ID" value="UER00895"/>
</dbReference>
<dbReference type="Proteomes" id="UP000008332">
    <property type="component" value="Chromosome"/>
</dbReference>
<dbReference type="GO" id="GO:0005737">
    <property type="term" value="C:cytoplasm"/>
    <property type="evidence" value="ECO:0007669"/>
    <property type="project" value="UniProtKB-SubCell"/>
</dbReference>
<dbReference type="GO" id="GO:0005524">
    <property type="term" value="F:ATP binding"/>
    <property type="evidence" value="ECO:0007669"/>
    <property type="project" value="UniProtKB-UniRule"/>
</dbReference>
<dbReference type="GO" id="GO:0004828">
    <property type="term" value="F:serine-tRNA ligase activity"/>
    <property type="evidence" value="ECO:0007669"/>
    <property type="project" value="UniProtKB-UniRule"/>
</dbReference>
<dbReference type="GO" id="GO:0016260">
    <property type="term" value="P:selenocysteine biosynthetic process"/>
    <property type="evidence" value="ECO:0007669"/>
    <property type="project" value="UniProtKB-UniRule"/>
</dbReference>
<dbReference type="GO" id="GO:0006434">
    <property type="term" value="P:seryl-tRNA aminoacylation"/>
    <property type="evidence" value="ECO:0007669"/>
    <property type="project" value="UniProtKB-UniRule"/>
</dbReference>
<dbReference type="CDD" id="cd00770">
    <property type="entry name" value="SerRS_core"/>
    <property type="match status" value="1"/>
</dbReference>
<dbReference type="Gene3D" id="3.30.930.10">
    <property type="entry name" value="Bira Bifunctional Protein, Domain 2"/>
    <property type="match status" value="1"/>
</dbReference>
<dbReference type="Gene3D" id="1.10.287.40">
    <property type="entry name" value="Serine-tRNA synthetase, tRNA binding domain"/>
    <property type="match status" value="1"/>
</dbReference>
<dbReference type="HAMAP" id="MF_00176">
    <property type="entry name" value="Ser_tRNA_synth_type1"/>
    <property type="match status" value="1"/>
</dbReference>
<dbReference type="InterPro" id="IPR002314">
    <property type="entry name" value="aa-tRNA-synt_IIb"/>
</dbReference>
<dbReference type="InterPro" id="IPR006195">
    <property type="entry name" value="aa-tRNA-synth_II"/>
</dbReference>
<dbReference type="InterPro" id="IPR045864">
    <property type="entry name" value="aa-tRNA-synth_II/BPL/LPL"/>
</dbReference>
<dbReference type="InterPro" id="IPR002317">
    <property type="entry name" value="Ser-tRNA-ligase_type_1"/>
</dbReference>
<dbReference type="InterPro" id="IPR015866">
    <property type="entry name" value="Ser-tRNA-synth_1_N"/>
</dbReference>
<dbReference type="InterPro" id="IPR042103">
    <property type="entry name" value="SerRS_1_N_sf"/>
</dbReference>
<dbReference type="InterPro" id="IPR033729">
    <property type="entry name" value="SerRS_core"/>
</dbReference>
<dbReference type="InterPro" id="IPR010978">
    <property type="entry name" value="tRNA-bd_arm"/>
</dbReference>
<dbReference type="NCBIfam" id="TIGR00414">
    <property type="entry name" value="serS"/>
    <property type="match status" value="1"/>
</dbReference>
<dbReference type="PANTHER" id="PTHR43697:SF1">
    <property type="entry name" value="SERINE--TRNA LIGASE"/>
    <property type="match status" value="1"/>
</dbReference>
<dbReference type="PANTHER" id="PTHR43697">
    <property type="entry name" value="SERYL-TRNA SYNTHETASE"/>
    <property type="match status" value="1"/>
</dbReference>
<dbReference type="Pfam" id="PF02403">
    <property type="entry name" value="Seryl_tRNA_N"/>
    <property type="match status" value="1"/>
</dbReference>
<dbReference type="Pfam" id="PF00587">
    <property type="entry name" value="tRNA-synt_2b"/>
    <property type="match status" value="1"/>
</dbReference>
<dbReference type="PIRSF" id="PIRSF001529">
    <property type="entry name" value="Ser-tRNA-synth_IIa"/>
    <property type="match status" value="1"/>
</dbReference>
<dbReference type="PRINTS" id="PR00981">
    <property type="entry name" value="TRNASYNTHSER"/>
</dbReference>
<dbReference type="SUPFAM" id="SSF55681">
    <property type="entry name" value="Class II aaRS and biotin synthetases"/>
    <property type="match status" value="1"/>
</dbReference>
<dbReference type="SUPFAM" id="SSF46589">
    <property type="entry name" value="tRNA-binding arm"/>
    <property type="match status" value="1"/>
</dbReference>
<dbReference type="PROSITE" id="PS50862">
    <property type="entry name" value="AA_TRNA_LIGASE_II"/>
    <property type="match status" value="1"/>
</dbReference>
<protein>
    <recommendedName>
        <fullName evidence="1">Serine--tRNA ligase</fullName>
        <ecNumber evidence="1">6.1.1.11</ecNumber>
    </recommendedName>
    <alternativeName>
        <fullName evidence="1">Seryl-tRNA synthetase</fullName>
        <shortName evidence="1">SerRS</shortName>
    </alternativeName>
    <alternativeName>
        <fullName evidence="1">Seryl-tRNA(Ser/Sec) synthetase</fullName>
    </alternativeName>
</protein>
<sequence>MLDITTLRKDLDSVIARLETRKSPQAFLNVDTFRTLEAERKTIQMRTEELQGKRNTLSKQIGQLKAKGAAGQAESDAVMAEVAGLKAELETSATRLEQIQLELQALLLGVPNLPHESVPVGADEHGNVVVRSWSPDGKGPKAFDFEVKDHVDIGTPLGLDFELGVKLTGARFTVMKGLIARLHRALAQFMLDVQTQEHGYTECYTPYIVNAQSMRGTGQLPKFEADLFAAKKGGQEAEAAPDNSALYLIPTSEVPLTNFVRDVVLAEAELPVKLTAHTPCFRSEAGSAGRDTRGLIRQHQFDKVEMVQIVHPDKSYETLEQMTGHAEAILQKLGLPYRVMSLCTGDMGFGASKTYDLEVWLPAQNTYREISSVSNCEAFQARRLQARFKNAQGKNELVHTLNGSGLAVGRALVAVLENYQNADGSVTVPQALRPYVGGQKVLGATAMNDMDM</sequence>
<feature type="chain" id="PRO_1000019791" description="Serine--tRNA ligase">
    <location>
        <begin position="1"/>
        <end position="452"/>
    </location>
</feature>
<feature type="binding site" evidence="1">
    <location>
        <begin position="251"/>
        <end position="253"/>
    </location>
    <ligand>
        <name>L-serine</name>
        <dbReference type="ChEBI" id="CHEBI:33384"/>
    </ligand>
</feature>
<feature type="binding site" evidence="1">
    <location>
        <begin position="282"/>
        <end position="284"/>
    </location>
    <ligand>
        <name>ATP</name>
        <dbReference type="ChEBI" id="CHEBI:30616"/>
    </ligand>
</feature>
<feature type="binding site" evidence="1">
    <location>
        <position position="305"/>
    </location>
    <ligand>
        <name>L-serine</name>
        <dbReference type="ChEBI" id="CHEBI:33384"/>
    </ligand>
</feature>
<feature type="binding site" evidence="1">
    <location>
        <begin position="369"/>
        <end position="372"/>
    </location>
    <ligand>
        <name>ATP</name>
        <dbReference type="ChEBI" id="CHEBI:30616"/>
    </ligand>
</feature>
<feature type="binding site" evidence="1">
    <location>
        <position position="404"/>
    </location>
    <ligand>
        <name>L-serine</name>
        <dbReference type="ChEBI" id="CHEBI:33384"/>
    </ligand>
</feature>
<evidence type="ECO:0000255" key="1">
    <source>
        <dbReference type="HAMAP-Rule" id="MF_00176"/>
    </source>
</evidence>
<reference key="1">
    <citation type="submission" date="2006-02" db="EMBL/GenBank/DDBJ databases">
        <title>Complete sequence of chromosome of Rhodoferax ferrireducens DSM 15236.</title>
        <authorList>
            <person name="Copeland A."/>
            <person name="Lucas S."/>
            <person name="Lapidus A."/>
            <person name="Barry K."/>
            <person name="Detter J.C."/>
            <person name="Glavina del Rio T."/>
            <person name="Hammon N."/>
            <person name="Israni S."/>
            <person name="Pitluck S."/>
            <person name="Brettin T."/>
            <person name="Bruce D."/>
            <person name="Han C."/>
            <person name="Tapia R."/>
            <person name="Gilna P."/>
            <person name="Kiss H."/>
            <person name="Schmutz J."/>
            <person name="Larimer F."/>
            <person name="Land M."/>
            <person name="Kyrpides N."/>
            <person name="Ivanova N."/>
            <person name="Richardson P."/>
        </authorList>
    </citation>
    <scope>NUCLEOTIDE SEQUENCE [LARGE SCALE GENOMIC DNA]</scope>
    <source>
        <strain>ATCC BAA-621 / DSM 15236 / T118</strain>
    </source>
</reference>
<organism>
    <name type="scientific">Albidiferax ferrireducens (strain ATCC BAA-621 / DSM 15236 / T118)</name>
    <name type="common">Rhodoferax ferrireducens</name>
    <dbReference type="NCBI Taxonomy" id="338969"/>
    <lineage>
        <taxon>Bacteria</taxon>
        <taxon>Pseudomonadati</taxon>
        <taxon>Pseudomonadota</taxon>
        <taxon>Betaproteobacteria</taxon>
        <taxon>Burkholderiales</taxon>
        <taxon>Comamonadaceae</taxon>
        <taxon>Rhodoferax</taxon>
    </lineage>
</organism>
<proteinExistence type="inferred from homology"/>
<keyword id="KW-0030">Aminoacyl-tRNA synthetase</keyword>
<keyword id="KW-0067">ATP-binding</keyword>
<keyword id="KW-0963">Cytoplasm</keyword>
<keyword id="KW-0436">Ligase</keyword>
<keyword id="KW-0547">Nucleotide-binding</keyword>
<keyword id="KW-0648">Protein biosynthesis</keyword>
<keyword id="KW-1185">Reference proteome</keyword>
<comment type="function">
    <text evidence="1">Catalyzes the attachment of serine to tRNA(Ser). Is also able to aminoacylate tRNA(Sec) with serine, to form the misacylated tRNA L-seryl-tRNA(Sec), which will be further converted into selenocysteinyl-tRNA(Sec).</text>
</comment>
<comment type="catalytic activity">
    <reaction evidence="1">
        <text>tRNA(Ser) + L-serine + ATP = L-seryl-tRNA(Ser) + AMP + diphosphate + H(+)</text>
        <dbReference type="Rhea" id="RHEA:12292"/>
        <dbReference type="Rhea" id="RHEA-COMP:9669"/>
        <dbReference type="Rhea" id="RHEA-COMP:9703"/>
        <dbReference type="ChEBI" id="CHEBI:15378"/>
        <dbReference type="ChEBI" id="CHEBI:30616"/>
        <dbReference type="ChEBI" id="CHEBI:33019"/>
        <dbReference type="ChEBI" id="CHEBI:33384"/>
        <dbReference type="ChEBI" id="CHEBI:78442"/>
        <dbReference type="ChEBI" id="CHEBI:78533"/>
        <dbReference type="ChEBI" id="CHEBI:456215"/>
        <dbReference type="EC" id="6.1.1.11"/>
    </reaction>
</comment>
<comment type="catalytic activity">
    <reaction evidence="1">
        <text>tRNA(Sec) + L-serine + ATP = L-seryl-tRNA(Sec) + AMP + diphosphate + H(+)</text>
        <dbReference type="Rhea" id="RHEA:42580"/>
        <dbReference type="Rhea" id="RHEA-COMP:9742"/>
        <dbReference type="Rhea" id="RHEA-COMP:10128"/>
        <dbReference type="ChEBI" id="CHEBI:15378"/>
        <dbReference type="ChEBI" id="CHEBI:30616"/>
        <dbReference type="ChEBI" id="CHEBI:33019"/>
        <dbReference type="ChEBI" id="CHEBI:33384"/>
        <dbReference type="ChEBI" id="CHEBI:78442"/>
        <dbReference type="ChEBI" id="CHEBI:78533"/>
        <dbReference type="ChEBI" id="CHEBI:456215"/>
        <dbReference type="EC" id="6.1.1.11"/>
    </reaction>
</comment>
<comment type="pathway">
    <text evidence="1">Aminoacyl-tRNA biosynthesis; selenocysteinyl-tRNA(Sec) biosynthesis; L-seryl-tRNA(Sec) from L-serine and tRNA(Sec): step 1/1.</text>
</comment>
<comment type="subunit">
    <text evidence="1">Homodimer. The tRNA molecule binds across the dimer.</text>
</comment>
<comment type="subcellular location">
    <subcellularLocation>
        <location evidence="1">Cytoplasm</location>
    </subcellularLocation>
</comment>
<comment type="domain">
    <text evidence="1">Consists of two distinct domains, a catalytic core and a N-terminal extension that is involved in tRNA binding.</text>
</comment>
<comment type="similarity">
    <text evidence="1">Belongs to the class-II aminoacyl-tRNA synthetase family. Type-1 seryl-tRNA synthetase subfamily.</text>
</comment>
<name>SYS_ALBFT</name>